<organism>
    <name type="scientific">Clostridium kluyveri (strain ATCC 8527 / DSM 555 / NBRC 12016 / NCIMB 10680 / K1)</name>
    <dbReference type="NCBI Taxonomy" id="431943"/>
    <lineage>
        <taxon>Bacteria</taxon>
        <taxon>Bacillati</taxon>
        <taxon>Bacillota</taxon>
        <taxon>Clostridia</taxon>
        <taxon>Eubacteriales</taxon>
        <taxon>Clostridiaceae</taxon>
        <taxon>Clostridium</taxon>
    </lineage>
</organism>
<reference key="1">
    <citation type="journal article" date="2008" name="Proc. Natl. Acad. Sci. U.S.A.">
        <title>The genome of Clostridium kluyveri, a strict anaerobe with unique metabolic features.</title>
        <authorList>
            <person name="Seedorf H."/>
            <person name="Fricke W.F."/>
            <person name="Veith B."/>
            <person name="Brueggemann H."/>
            <person name="Liesegang H."/>
            <person name="Strittmatter A."/>
            <person name="Miethke M."/>
            <person name="Buckel W."/>
            <person name="Hinderberger J."/>
            <person name="Li F."/>
            <person name="Hagemeier C."/>
            <person name="Thauer R.K."/>
            <person name="Gottschalk G."/>
        </authorList>
    </citation>
    <scope>NUCLEOTIDE SEQUENCE [LARGE SCALE GENOMIC DNA]</scope>
    <source>
        <strain>ATCC 8527 / DSM 555 / NBRC 12016 / NCIMB 10680 / K1</strain>
    </source>
</reference>
<name>SYN_CLOK5</name>
<protein>
    <recommendedName>
        <fullName evidence="1">Asparagine--tRNA ligase</fullName>
        <ecNumber evidence="1">6.1.1.22</ecNumber>
    </recommendedName>
    <alternativeName>
        <fullName evidence="1">Asparaginyl-tRNA synthetase</fullName>
        <shortName evidence="1">AsnRS</shortName>
    </alternativeName>
</protein>
<sequence length="463" mass="53227">MKKTLVKSLYRETEKFIDKDIEISGWIRTIRDSKSFAFIELNDGSFFKNVQVVLDDKIENFKEIIKLPISSSLSVEGTLILTPNAKQSFEIKAKKISLEGNSSSEYPLQKKRHTLEYLRTIAHLRPRSNTFSAVFRVRSIAAYAVHKFFQEKDFVYVNTPIITGSDCEGAGEMFRITTMDLNNVPKEEDNSVDFSKDFFGKETNLTVSGQLSAETMALAFRNVYTFGPTFRAEDSNTSRHAAEFWMIEPEMAFAELKDYMDTAEELVKYIINYVLEKAPEEMAFFNSFIDKSLFDRLNNVVNSEFGRITYTEAVDILQKSGASFQYPVEWGIDLQTEHERYLTEKVFEKPIFVTDYPKAIKAFYMRENEDGKTVAAADLLVPGVGEIVGGSQREERLSVLEKRISEFGLNKEDYWWYLELRKYGETKHSGFGLGFERILMYITGMSNIRDVIPFPRTPGSAEF</sequence>
<accession>A5N4F7</accession>
<proteinExistence type="inferred from homology"/>
<comment type="catalytic activity">
    <reaction evidence="1">
        <text>tRNA(Asn) + L-asparagine + ATP = L-asparaginyl-tRNA(Asn) + AMP + diphosphate + H(+)</text>
        <dbReference type="Rhea" id="RHEA:11180"/>
        <dbReference type="Rhea" id="RHEA-COMP:9659"/>
        <dbReference type="Rhea" id="RHEA-COMP:9674"/>
        <dbReference type="ChEBI" id="CHEBI:15378"/>
        <dbReference type="ChEBI" id="CHEBI:30616"/>
        <dbReference type="ChEBI" id="CHEBI:33019"/>
        <dbReference type="ChEBI" id="CHEBI:58048"/>
        <dbReference type="ChEBI" id="CHEBI:78442"/>
        <dbReference type="ChEBI" id="CHEBI:78515"/>
        <dbReference type="ChEBI" id="CHEBI:456215"/>
        <dbReference type="EC" id="6.1.1.22"/>
    </reaction>
</comment>
<comment type="subunit">
    <text evidence="1">Homodimer.</text>
</comment>
<comment type="subcellular location">
    <subcellularLocation>
        <location evidence="1">Cytoplasm</location>
    </subcellularLocation>
</comment>
<comment type="similarity">
    <text evidence="1">Belongs to the class-II aminoacyl-tRNA synthetase family.</text>
</comment>
<gene>
    <name evidence="1" type="primary">asnS</name>
    <name type="ordered locus">CKL_0118</name>
</gene>
<dbReference type="EC" id="6.1.1.22" evidence="1"/>
<dbReference type="EMBL" id="CP000673">
    <property type="protein sequence ID" value="EDK32188.1"/>
    <property type="molecule type" value="Genomic_DNA"/>
</dbReference>
<dbReference type="RefSeq" id="WP_011988714.1">
    <property type="nucleotide sequence ID" value="NC_009706.1"/>
</dbReference>
<dbReference type="SMR" id="A5N4F7"/>
<dbReference type="STRING" id="431943.CKL_0118"/>
<dbReference type="KEGG" id="ckl:CKL_0118"/>
<dbReference type="eggNOG" id="COG0017">
    <property type="taxonomic scope" value="Bacteria"/>
</dbReference>
<dbReference type="HOGENOM" id="CLU_004553_2_0_9"/>
<dbReference type="Proteomes" id="UP000002411">
    <property type="component" value="Chromosome"/>
</dbReference>
<dbReference type="GO" id="GO:0005737">
    <property type="term" value="C:cytoplasm"/>
    <property type="evidence" value="ECO:0007669"/>
    <property type="project" value="UniProtKB-SubCell"/>
</dbReference>
<dbReference type="GO" id="GO:0004816">
    <property type="term" value="F:asparagine-tRNA ligase activity"/>
    <property type="evidence" value="ECO:0007669"/>
    <property type="project" value="UniProtKB-UniRule"/>
</dbReference>
<dbReference type="GO" id="GO:0005524">
    <property type="term" value="F:ATP binding"/>
    <property type="evidence" value="ECO:0007669"/>
    <property type="project" value="UniProtKB-UniRule"/>
</dbReference>
<dbReference type="GO" id="GO:0140096">
    <property type="term" value="F:catalytic activity, acting on a protein"/>
    <property type="evidence" value="ECO:0007669"/>
    <property type="project" value="UniProtKB-ARBA"/>
</dbReference>
<dbReference type="GO" id="GO:0003676">
    <property type="term" value="F:nucleic acid binding"/>
    <property type="evidence" value="ECO:0007669"/>
    <property type="project" value="InterPro"/>
</dbReference>
<dbReference type="GO" id="GO:0016740">
    <property type="term" value="F:transferase activity"/>
    <property type="evidence" value="ECO:0007669"/>
    <property type="project" value="UniProtKB-ARBA"/>
</dbReference>
<dbReference type="GO" id="GO:0006421">
    <property type="term" value="P:asparaginyl-tRNA aminoacylation"/>
    <property type="evidence" value="ECO:0007669"/>
    <property type="project" value="UniProtKB-UniRule"/>
</dbReference>
<dbReference type="CDD" id="cd00776">
    <property type="entry name" value="AsxRS_core"/>
    <property type="match status" value="1"/>
</dbReference>
<dbReference type="CDD" id="cd04318">
    <property type="entry name" value="EcAsnRS_like_N"/>
    <property type="match status" value="1"/>
</dbReference>
<dbReference type="FunFam" id="3.30.930.10:FF:000016">
    <property type="entry name" value="Asparagine--tRNA ligase"/>
    <property type="match status" value="1"/>
</dbReference>
<dbReference type="Gene3D" id="3.30.930.10">
    <property type="entry name" value="Bira Bifunctional Protein, Domain 2"/>
    <property type="match status" value="1"/>
</dbReference>
<dbReference type="Gene3D" id="2.40.50.140">
    <property type="entry name" value="Nucleic acid-binding proteins"/>
    <property type="match status" value="1"/>
</dbReference>
<dbReference type="HAMAP" id="MF_00534">
    <property type="entry name" value="Asn_tRNA_synth"/>
    <property type="match status" value="1"/>
</dbReference>
<dbReference type="InterPro" id="IPR004364">
    <property type="entry name" value="Aa-tRNA-synt_II"/>
</dbReference>
<dbReference type="InterPro" id="IPR006195">
    <property type="entry name" value="aa-tRNA-synth_II"/>
</dbReference>
<dbReference type="InterPro" id="IPR045864">
    <property type="entry name" value="aa-tRNA-synth_II/BPL/LPL"/>
</dbReference>
<dbReference type="InterPro" id="IPR004522">
    <property type="entry name" value="Asn-tRNA-ligase"/>
</dbReference>
<dbReference type="InterPro" id="IPR002312">
    <property type="entry name" value="Asp/Asn-tRNA-synth_IIb"/>
</dbReference>
<dbReference type="InterPro" id="IPR012340">
    <property type="entry name" value="NA-bd_OB-fold"/>
</dbReference>
<dbReference type="InterPro" id="IPR004365">
    <property type="entry name" value="NA-bd_OB_tRNA"/>
</dbReference>
<dbReference type="NCBIfam" id="TIGR00457">
    <property type="entry name" value="asnS"/>
    <property type="match status" value="1"/>
</dbReference>
<dbReference type="NCBIfam" id="NF003037">
    <property type="entry name" value="PRK03932.1"/>
    <property type="match status" value="1"/>
</dbReference>
<dbReference type="PANTHER" id="PTHR22594:SF34">
    <property type="entry name" value="ASPARAGINE--TRNA LIGASE, MITOCHONDRIAL-RELATED"/>
    <property type="match status" value="1"/>
</dbReference>
<dbReference type="PANTHER" id="PTHR22594">
    <property type="entry name" value="ASPARTYL/LYSYL-TRNA SYNTHETASE"/>
    <property type="match status" value="1"/>
</dbReference>
<dbReference type="Pfam" id="PF00152">
    <property type="entry name" value="tRNA-synt_2"/>
    <property type="match status" value="1"/>
</dbReference>
<dbReference type="Pfam" id="PF01336">
    <property type="entry name" value="tRNA_anti-codon"/>
    <property type="match status" value="1"/>
</dbReference>
<dbReference type="PRINTS" id="PR01042">
    <property type="entry name" value="TRNASYNTHASP"/>
</dbReference>
<dbReference type="SUPFAM" id="SSF55681">
    <property type="entry name" value="Class II aaRS and biotin synthetases"/>
    <property type="match status" value="1"/>
</dbReference>
<dbReference type="SUPFAM" id="SSF50249">
    <property type="entry name" value="Nucleic acid-binding proteins"/>
    <property type="match status" value="1"/>
</dbReference>
<dbReference type="PROSITE" id="PS50862">
    <property type="entry name" value="AA_TRNA_LIGASE_II"/>
    <property type="match status" value="1"/>
</dbReference>
<keyword id="KW-0030">Aminoacyl-tRNA synthetase</keyword>
<keyword id="KW-0067">ATP-binding</keyword>
<keyword id="KW-0963">Cytoplasm</keyword>
<keyword id="KW-0436">Ligase</keyword>
<keyword id="KW-0547">Nucleotide-binding</keyword>
<keyword id="KW-0648">Protein biosynthesis</keyword>
<keyword id="KW-1185">Reference proteome</keyword>
<evidence type="ECO:0000255" key="1">
    <source>
        <dbReference type="HAMAP-Rule" id="MF_00534"/>
    </source>
</evidence>
<feature type="chain" id="PRO_1000081846" description="Asparagine--tRNA ligase">
    <location>
        <begin position="1"/>
        <end position="463"/>
    </location>
</feature>